<accession>A2RF79</accession>
<feature type="chain" id="PRO_1000043200" description="3-dehydroquinate dehydratase">
    <location>
        <begin position="1"/>
        <end position="228"/>
    </location>
</feature>
<feature type="active site" description="Proton donor/acceptor" evidence="1">
    <location>
        <position position="118"/>
    </location>
</feature>
<feature type="active site" description="Schiff-base intermediate with substrate" evidence="1">
    <location>
        <position position="143"/>
    </location>
</feature>
<feature type="binding site" evidence="1">
    <location>
        <begin position="30"/>
        <end position="32"/>
    </location>
    <ligand>
        <name>3-dehydroquinate</name>
        <dbReference type="ChEBI" id="CHEBI:32364"/>
    </ligand>
</feature>
<feature type="binding site" evidence="1">
    <location>
        <position position="62"/>
    </location>
    <ligand>
        <name>3-dehydroquinate</name>
        <dbReference type="ChEBI" id="CHEBI:32364"/>
    </ligand>
</feature>
<feature type="binding site" evidence="1">
    <location>
        <position position="186"/>
    </location>
    <ligand>
        <name>3-dehydroquinate</name>
        <dbReference type="ChEBI" id="CHEBI:32364"/>
    </ligand>
</feature>
<feature type="binding site" evidence="1">
    <location>
        <position position="205"/>
    </location>
    <ligand>
        <name>3-dehydroquinate</name>
        <dbReference type="ChEBI" id="CHEBI:32364"/>
    </ligand>
</feature>
<feature type="binding site" evidence="1">
    <location>
        <position position="209"/>
    </location>
    <ligand>
        <name>3-dehydroquinate</name>
        <dbReference type="ChEBI" id="CHEBI:32364"/>
    </ligand>
</feature>
<comment type="function">
    <text evidence="1">Involved in the third step of the chorismate pathway, which leads to the biosynthesis of aromatic amino acids. Catalyzes the cis-dehydration of 3-dehydroquinate (DHQ) and introduces the first double bond of the aromatic ring to yield 3-dehydroshikimate.</text>
</comment>
<comment type="catalytic activity">
    <reaction evidence="1">
        <text>3-dehydroquinate = 3-dehydroshikimate + H2O</text>
        <dbReference type="Rhea" id="RHEA:21096"/>
        <dbReference type="ChEBI" id="CHEBI:15377"/>
        <dbReference type="ChEBI" id="CHEBI:16630"/>
        <dbReference type="ChEBI" id="CHEBI:32364"/>
        <dbReference type="EC" id="4.2.1.10"/>
    </reaction>
</comment>
<comment type="pathway">
    <text evidence="1">Metabolic intermediate biosynthesis; chorismate biosynthesis; chorismate from D-erythrose 4-phosphate and phosphoenolpyruvate: step 3/7.</text>
</comment>
<comment type="subunit">
    <text evidence="1">Homodimer.</text>
</comment>
<comment type="similarity">
    <text evidence="1">Belongs to the type-I 3-dehydroquinase family.</text>
</comment>
<protein>
    <recommendedName>
        <fullName evidence="1">3-dehydroquinate dehydratase</fullName>
        <shortName evidence="1">3-dehydroquinase</shortName>
        <ecNumber evidence="1">4.2.1.10</ecNumber>
    </recommendedName>
    <alternativeName>
        <fullName evidence="1">Type I DHQase</fullName>
    </alternativeName>
    <alternativeName>
        <fullName evidence="1">Type I dehydroquinase</fullName>
        <shortName evidence="1">DHQ1</shortName>
    </alternativeName>
</protein>
<proteinExistence type="inferred from homology"/>
<dbReference type="EC" id="4.2.1.10" evidence="1"/>
<dbReference type="EMBL" id="AM295007">
    <property type="protein sequence ID" value="CAM30508.1"/>
    <property type="molecule type" value="Genomic_DNA"/>
</dbReference>
<dbReference type="RefSeq" id="WP_002985140.1">
    <property type="nucleotide sequence ID" value="NC_009332.1"/>
</dbReference>
<dbReference type="SMR" id="A2RF79"/>
<dbReference type="GeneID" id="69901072"/>
<dbReference type="KEGG" id="spf:SpyM51183"/>
<dbReference type="HOGENOM" id="CLU_064444_0_0_9"/>
<dbReference type="UniPathway" id="UPA00053">
    <property type="reaction ID" value="UER00086"/>
</dbReference>
<dbReference type="GO" id="GO:0003855">
    <property type="term" value="F:3-dehydroquinate dehydratase activity"/>
    <property type="evidence" value="ECO:0007669"/>
    <property type="project" value="UniProtKB-UniRule"/>
</dbReference>
<dbReference type="GO" id="GO:0046279">
    <property type="term" value="P:3,4-dihydroxybenzoate biosynthetic process"/>
    <property type="evidence" value="ECO:0007669"/>
    <property type="project" value="TreeGrafter"/>
</dbReference>
<dbReference type="GO" id="GO:0008652">
    <property type="term" value="P:amino acid biosynthetic process"/>
    <property type="evidence" value="ECO:0007669"/>
    <property type="project" value="UniProtKB-KW"/>
</dbReference>
<dbReference type="GO" id="GO:0009073">
    <property type="term" value="P:aromatic amino acid family biosynthetic process"/>
    <property type="evidence" value="ECO:0007669"/>
    <property type="project" value="UniProtKB-KW"/>
</dbReference>
<dbReference type="GO" id="GO:0009423">
    <property type="term" value="P:chorismate biosynthetic process"/>
    <property type="evidence" value="ECO:0007669"/>
    <property type="project" value="UniProtKB-UniRule"/>
</dbReference>
<dbReference type="CDD" id="cd00502">
    <property type="entry name" value="DHQase_I"/>
    <property type="match status" value="1"/>
</dbReference>
<dbReference type="Gene3D" id="3.20.20.70">
    <property type="entry name" value="Aldolase class I"/>
    <property type="match status" value="1"/>
</dbReference>
<dbReference type="HAMAP" id="MF_00214">
    <property type="entry name" value="AroD"/>
    <property type="match status" value="1"/>
</dbReference>
<dbReference type="InterPro" id="IPR013785">
    <property type="entry name" value="Aldolase_TIM"/>
</dbReference>
<dbReference type="InterPro" id="IPR001381">
    <property type="entry name" value="DHquinase_I"/>
</dbReference>
<dbReference type="InterPro" id="IPR050146">
    <property type="entry name" value="Type-I_3-dehydroquinase"/>
</dbReference>
<dbReference type="NCBIfam" id="TIGR01093">
    <property type="entry name" value="aroD"/>
    <property type="match status" value="1"/>
</dbReference>
<dbReference type="PANTHER" id="PTHR43699">
    <property type="entry name" value="3-DEHYDROQUINATE DEHYDRATASE"/>
    <property type="match status" value="1"/>
</dbReference>
<dbReference type="PANTHER" id="PTHR43699:SF1">
    <property type="entry name" value="3-DEHYDROQUINATE DEHYDRATASE"/>
    <property type="match status" value="1"/>
</dbReference>
<dbReference type="Pfam" id="PF01487">
    <property type="entry name" value="DHquinase_I"/>
    <property type="match status" value="1"/>
</dbReference>
<dbReference type="SUPFAM" id="SSF51569">
    <property type="entry name" value="Aldolase"/>
    <property type="match status" value="1"/>
</dbReference>
<name>AROD_STRPG</name>
<keyword id="KW-0028">Amino-acid biosynthesis</keyword>
<keyword id="KW-0057">Aromatic amino acid biosynthesis</keyword>
<keyword id="KW-0456">Lyase</keyword>
<keyword id="KW-0704">Schiff base</keyword>
<reference key="1">
    <citation type="journal article" date="2007" name="J. Bacteriol.">
        <title>Complete genome of acute rheumatic fever-associated serotype M5 Streptococcus pyogenes strain Manfredo.</title>
        <authorList>
            <person name="Holden M.T.G."/>
            <person name="Scott A."/>
            <person name="Cherevach I."/>
            <person name="Chillingworth T."/>
            <person name="Churcher C."/>
            <person name="Cronin A."/>
            <person name="Dowd L."/>
            <person name="Feltwell T."/>
            <person name="Hamlin N."/>
            <person name="Holroyd S."/>
            <person name="Jagels K."/>
            <person name="Moule S."/>
            <person name="Mungall K."/>
            <person name="Quail M.A."/>
            <person name="Price C."/>
            <person name="Rabbinowitsch E."/>
            <person name="Sharp S."/>
            <person name="Skelton J."/>
            <person name="Whitehead S."/>
            <person name="Barrell B.G."/>
            <person name="Kehoe M."/>
            <person name="Parkhill J."/>
        </authorList>
    </citation>
    <scope>NUCLEOTIDE SEQUENCE [LARGE SCALE GENOMIC DNA]</scope>
    <source>
        <strain>Manfredo</strain>
    </source>
</reference>
<sequence>MRIVAPVMPRHFDEAQAIDISKYEDVNLIEWRADFLPKDEIVAVAPAIFEKFAGKEIIFTLRTVQEGGNITLSSQEYVDIIKEINAIYNPDYIDFEYFTHKSVFQEMLDFPNLILSYHNFEETPENLMEAFSEMTKLAPRVVKIAVMPQSEQDVLDLMNYTRGFKTLNPEQEFATISMGKLGRLSRFAGDVIGSSWTYVSLDHVSGPGQVTLNDMKRIIEVLEMDISN</sequence>
<evidence type="ECO:0000255" key="1">
    <source>
        <dbReference type="HAMAP-Rule" id="MF_00214"/>
    </source>
</evidence>
<gene>
    <name evidence="1" type="primary">aroD</name>
    <name type="ordered locus">SpyM51183</name>
</gene>
<organism>
    <name type="scientific">Streptococcus pyogenes serotype M5 (strain Manfredo)</name>
    <dbReference type="NCBI Taxonomy" id="160491"/>
    <lineage>
        <taxon>Bacteria</taxon>
        <taxon>Bacillati</taxon>
        <taxon>Bacillota</taxon>
        <taxon>Bacilli</taxon>
        <taxon>Lactobacillales</taxon>
        <taxon>Streptococcaceae</taxon>
        <taxon>Streptococcus</taxon>
    </lineage>
</organism>